<keyword id="KW-1003">Cell membrane</keyword>
<keyword id="KW-0201">Cytochrome c-type biogenesis</keyword>
<keyword id="KW-1015">Disulfide bond</keyword>
<keyword id="KW-0472">Membrane</keyword>
<keyword id="KW-0560">Oxidoreductase</keyword>
<keyword id="KW-0676">Redox-active center</keyword>
<keyword id="KW-1185">Reference proteome</keyword>
<keyword id="KW-0735">Signal-anchor</keyword>
<keyword id="KW-0812">Transmembrane</keyword>
<keyword id="KW-1133">Transmembrane helix</keyword>
<sequence length="192" mass="21904">MDIQQNKTNKQKKKRNRFIFRSSILLILVAAVVFAIVSNMKDDNKIYRVGDAAPDFQLKQISEEVDQSTVQLSDLEGKGVMLNFWATWCDPCKAEMPYMQDLYAEYKEKGVEIVAVSLDGTELVVDQFIDEYDLTFPVPHDKNGEVKDLYKIGPMPTTYFIKPNGEIEEIVQGALTLDRLEGYLNDIAPQQN</sequence>
<accession>Q8CXF3</accession>
<reference key="1">
    <citation type="journal article" date="2002" name="Nucleic Acids Res.">
        <title>Genome sequence of Oceanobacillus iheyensis isolated from the Iheya Ridge and its unexpected adaptive capabilities to extreme environments.</title>
        <authorList>
            <person name="Takami H."/>
            <person name="Takaki Y."/>
            <person name="Uchiyama I."/>
        </authorList>
    </citation>
    <scope>NUCLEOTIDE SEQUENCE [LARGE SCALE GENOMIC DNA]</scope>
    <source>
        <strain>DSM 14371 / CIP 107618 / JCM 11309 / KCTC 3954 / HTE831</strain>
    </source>
</reference>
<proteinExistence type="inferred from homology"/>
<dbReference type="EMBL" id="BA000028">
    <property type="protein sequence ID" value="BAC13778.1"/>
    <property type="molecule type" value="Genomic_DNA"/>
</dbReference>
<dbReference type="RefSeq" id="WP_011066220.1">
    <property type="nucleotide sequence ID" value="NC_004193.1"/>
</dbReference>
<dbReference type="SMR" id="Q8CXF3"/>
<dbReference type="STRING" id="221109.gene:10734062"/>
<dbReference type="KEGG" id="oih:OB1822"/>
<dbReference type="eggNOG" id="COG0526">
    <property type="taxonomic scope" value="Bacteria"/>
</dbReference>
<dbReference type="HOGENOM" id="CLU_042529_11_2_9"/>
<dbReference type="OrthoDB" id="25753at2"/>
<dbReference type="PhylomeDB" id="Q8CXF3"/>
<dbReference type="UniPathway" id="UPA00555"/>
<dbReference type="Proteomes" id="UP000000822">
    <property type="component" value="Chromosome"/>
</dbReference>
<dbReference type="GO" id="GO:0005886">
    <property type="term" value="C:plasma membrane"/>
    <property type="evidence" value="ECO:0007669"/>
    <property type="project" value="UniProtKB-SubCell"/>
</dbReference>
<dbReference type="GO" id="GO:0016209">
    <property type="term" value="F:antioxidant activity"/>
    <property type="evidence" value="ECO:0007669"/>
    <property type="project" value="InterPro"/>
</dbReference>
<dbReference type="GO" id="GO:0015036">
    <property type="term" value="F:disulfide oxidoreductase activity"/>
    <property type="evidence" value="ECO:0007669"/>
    <property type="project" value="UniProtKB-UniRule"/>
</dbReference>
<dbReference type="GO" id="GO:0017004">
    <property type="term" value="P:cytochrome complex assembly"/>
    <property type="evidence" value="ECO:0007669"/>
    <property type="project" value="UniProtKB-UniRule"/>
</dbReference>
<dbReference type="CDD" id="cd02966">
    <property type="entry name" value="TlpA_like_family"/>
    <property type="match status" value="1"/>
</dbReference>
<dbReference type="Gene3D" id="3.40.30.10">
    <property type="entry name" value="Glutaredoxin"/>
    <property type="match status" value="1"/>
</dbReference>
<dbReference type="HAMAP" id="MF_01319">
    <property type="entry name" value="ResA"/>
    <property type="match status" value="1"/>
</dbReference>
<dbReference type="InterPro" id="IPR000866">
    <property type="entry name" value="AhpC/TSA"/>
</dbReference>
<dbReference type="InterPro" id="IPR023555">
    <property type="entry name" value="Thiol-dS_OxRdtase_ResA"/>
</dbReference>
<dbReference type="InterPro" id="IPR036249">
    <property type="entry name" value="Thioredoxin-like_sf"/>
</dbReference>
<dbReference type="InterPro" id="IPR013766">
    <property type="entry name" value="Thioredoxin_domain"/>
</dbReference>
<dbReference type="InterPro" id="IPR050553">
    <property type="entry name" value="Thioredoxin_ResA/DsbE_sf"/>
</dbReference>
<dbReference type="NCBIfam" id="NF002854">
    <property type="entry name" value="PRK03147.1"/>
    <property type="match status" value="1"/>
</dbReference>
<dbReference type="PANTHER" id="PTHR42852">
    <property type="entry name" value="THIOL:DISULFIDE INTERCHANGE PROTEIN DSBE"/>
    <property type="match status" value="1"/>
</dbReference>
<dbReference type="PANTHER" id="PTHR42852:SF6">
    <property type="entry name" value="THIOL:DISULFIDE INTERCHANGE PROTEIN DSBE"/>
    <property type="match status" value="1"/>
</dbReference>
<dbReference type="Pfam" id="PF00578">
    <property type="entry name" value="AhpC-TSA"/>
    <property type="match status" value="1"/>
</dbReference>
<dbReference type="SUPFAM" id="SSF52833">
    <property type="entry name" value="Thioredoxin-like"/>
    <property type="match status" value="1"/>
</dbReference>
<dbReference type="PROSITE" id="PS51352">
    <property type="entry name" value="THIOREDOXIN_2"/>
    <property type="match status" value="1"/>
</dbReference>
<comment type="function">
    <text evidence="1">Thiol-disulfide oxidoreductase which is required in disulfide reduction during c-type cytochrome synthesis. May accept reducing equivalents from CcdA, leading to breakage of disulfide bonds in apocytochrome c; following this reduction heme can be covalently attached.</text>
</comment>
<comment type="pathway">
    <text evidence="1">Protein modification; cytochrome c assembly.</text>
</comment>
<comment type="subcellular location">
    <subcellularLocation>
        <location evidence="1">Cell membrane</location>
        <topology evidence="1">Single-pass type II membrane protein</topology>
    </subcellularLocation>
    <text evidence="1">The thioredoxin-like motif is exposed on the outside of the membrane.</text>
</comment>
<comment type="similarity">
    <text evidence="1">Belongs to the thioredoxin family. ResA subfamily.</text>
</comment>
<gene>
    <name evidence="1" type="primary">resA</name>
    <name type="ordered locus">OB1822</name>
</gene>
<feature type="chain" id="PRO_0000120150" description="Thiol-disulfide oxidoreductase ResA">
    <location>
        <begin position="1"/>
        <end position="192"/>
    </location>
</feature>
<feature type="transmembrane region" description="Helical; Signal-anchor for type II membrane protein" evidence="1">
    <location>
        <begin position="22"/>
        <end position="41"/>
    </location>
</feature>
<feature type="domain" description="Thioredoxin" evidence="1">
    <location>
        <begin position="47"/>
        <end position="189"/>
    </location>
</feature>
<feature type="disulfide bond" description="Redox-active" evidence="1">
    <location>
        <begin position="89"/>
        <end position="92"/>
    </location>
</feature>
<organism>
    <name type="scientific">Oceanobacillus iheyensis (strain DSM 14371 / CIP 107618 / JCM 11309 / KCTC 3954 / HTE831)</name>
    <dbReference type="NCBI Taxonomy" id="221109"/>
    <lineage>
        <taxon>Bacteria</taxon>
        <taxon>Bacillati</taxon>
        <taxon>Bacillota</taxon>
        <taxon>Bacilli</taxon>
        <taxon>Bacillales</taxon>
        <taxon>Bacillaceae</taxon>
        <taxon>Oceanobacillus</taxon>
    </lineage>
</organism>
<evidence type="ECO:0000255" key="1">
    <source>
        <dbReference type="HAMAP-Rule" id="MF_01319"/>
    </source>
</evidence>
<protein>
    <recommendedName>
        <fullName evidence="1">Thiol-disulfide oxidoreductase ResA</fullName>
    </recommendedName>
</protein>
<name>RESA_OCEIH</name>